<gene>
    <name evidence="1" type="primary">rplD</name>
    <name type="ordered locus">PHZ_c1231</name>
</gene>
<evidence type="ECO:0000255" key="1">
    <source>
        <dbReference type="HAMAP-Rule" id="MF_01328"/>
    </source>
</evidence>
<evidence type="ECO:0000305" key="2"/>
<name>RL4_PHEZH</name>
<proteinExistence type="inferred from homology"/>
<reference key="1">
    <citation type="journal article" date="2008" name="BMC Genomics">
        <title>Complete genome of Phenylobacterium zucineum - a novel facultative intracellular bacterium isolated from human erythroleukemia cell line K562.</title>
        <authorList>
            <person name="Luo Y."/>
            <person name="Xu X."/>
            <person name="Ding Z."/>
            <person name="Liu Z."/>
            <person name="Zhang B."/>
            <person name="Yan Z."/>
            <person name="Sun J."/>
            <person name="Hu S."/>
            <person name="Hu X."/>
        </authorList>
    </citation>
    <scope>NUCLEOTIDE SEQUENCE [LARGE SCALE GENOMIC DNA]</scope>
    <source>
        <strain>HLK1</strain>
    </source>
</reference>
<organism>
    <name type="scientific">Phenylobacterium zucineum (strain HLK1)</name>
    <dbReference type="NCBI Taxonomy" id="450851"/>
    <lineage>
        <taxon>Bacteria</taxon>
        <taxon>Pseudomonadati</taxon>
        <taxon>Pseudomonadota</taxon>
        <taxon>Alphaproteobacteria</taxon>
        <taxon>Caulobacterales</taxon>
        <taxon>Caulobacteraceae</taxon>
        <taxon>Phenylobacterium</taxon>
    </lineage>
</organism>
<dbReference type="EMBL" id="CP000747">
    <property type="protein sequence ID" value="ACG77645.1"/>
    <property type="molecule type" value="Genomic_DNA"/>
</dbReference>
<dbReference type="RefSeq" id="WP_012521789.1">
    <property type="nucleotide sequence ID" value="NC_011144.1"/>
</dbReference>
<dbReference type="SMR" id="B4R8L8"/>
<dbReference type="STRING" id="450851.PHZ_c1231"/>
<dbReference type="KEGG" id="pzu:PHZ_c1231"/>
<dbReference type="eggNOG" id="COG0088">
    <property type="taxonomic scope" value="Bacteria"/>
</dbReference>
<dbReference type="HOGENOM" id="CLU_041575_5_1_5"/>
<dbReference type="OrthoDB" id="9803201at2"/>
<dbReference type="Proteomes" id="UP000001868">
    <property type="component" value="Chromosome"/>
</dbReference>
<dbReference type="GO" id="GO:1990904">
    <property type="term" value="C:ribonucleoprotein complex"/>
    <property type="evidence" value="ECO:0007669"/>
    <property type="project" value="UniProtKB-KW"/>
</dbReference>
<dbReference type="GO" id="GO:0005840">
    <property type="term" value="C:ribosome"/>
    <property type="evidence" value="ECO:0007669"/>
    <property type="project" value="UniProtKB-KW"/>
</dbReference>
<dbReference type="GO" id="GO:0019843">
    <property type="term" value="F:rRNA binding"/>
    <property type="evidence" value="ECO:0007669"/>
    <property type="project" value="UniProtKB-UniRule"/>
</dbReference>
<dbReference type="GO" id="GO:0003735">
    <property type="term" value="F:structural constituent of ribosome"/>
    <property type="evidence" value="ECO:0007669"/>
    <property type="project" value="InterPro"/>
</dbReference>
<dbReference type="GO" id="GO:0006412">
    <property type="term" value="P:translation"/>
    <property type="evidence" value="ECO:0007669"/>
    <property type="project" value="UniProtKB-UniRule"/>
</dbReference>
<dbReference type="Gene3D" id="3.40.1370.10">
    <property type="match status" value="1"/>
</dbReference>
<dbReference type="HAMAP" id="MF_01328_B">
    <property type="entry name" value="Ribosomal_uL4_B"/>
    <property type="match status" value="1"/>
</dbReference>
<dbReference type="InterPro" id="IPR002136">
    <property type="entry name" value="Ribosomal_uL4"/>
</dbReference>
<dbReference type="InterPro" id="IPR013005">
    <property type="entry name" value="Ribosomal_uL4-like"/>
</dbReference>
<dbReference type="InterPro" id="IPR023574">
    <property type="entry name" value="Ribosomal_uL4_dom_sf"/>
</dbReference>
<dbReference type="NCBIfam" id="TIGR03953">
    <property type="entry name" value="rplD_bact"/>
    <property type="match status" value="1"/>
</dbReference>
<dbReference type="PANTHER" id="PTHR10746">
    <property type="entry name" value="50S RIBOSOMAL PROTEIN L4"/>
    <property type="match status" value="1"/>
</dbReference>
<dbReference type="PANTHER" id="PTHR10746:SF6">
    <property type="entry name" value="LARGE RIBOSOMAL SUBUNIT PROTEIN UL4M"/>
    <property type="match status" value="1"/>
</dbReference>
<dbReference type="Pfam" id="PF00573">
    <property type="entry name" value="Ribosomal_L4"/>
    <property type="match status" value="1"/>
</dbReference>
<dbReference type="SUPFAM" id="SSF52166">
    <property type="entry name" value="Ribosomal protein L4"/>
    <property type="match status" value="1"/>
</dbReference>
<comment type="function">
    <text evidence="1">One of the primary rRNA binding proteins, this protein initially binds near the 5'-end of the 23S rRNA. It is important during the early stages of 50S assembly. It makes multiple contacts with different domains of the 23S rRNA in the assembled 50S subunit and ribosome.</text>
</comment>
<comment type="function">
    <text evidence="1">Forms part of the polypeptide exit tunnel.</text>
</comment>
<comment type="subunit">
    <text evidence="1">Part of the 50S ribosomal subunit.</text>
</comment>
<comment type="similarity">
    <text evidence="1">Belongs to the universal ribosomal protein uL4 family.</text>
</comment>
<protein>
    <recommendedName>
        <fullName evidence="1">Large ribosomal subunit protein uL4</fullName>
    </recommendedName>
    <alternativeName>
        <fullName evidence="2">50S ribosomal protein L4</fullName>
    </alternativeName>
</protein>
<keyword id="KW-1185">Reference proteome</keyword>
<keyword id="KW-0687">Ribonucleoprotein</keyword>
<keyword id="KW-0689">Ribosomal protein</keyword>
<keyword id="KW-0694">RNA-binding</keyword>
<keyword id="KW-0699">rRNA-binding</keyword>
<feature type="chain" id="PRO_1000142164" description="Large ribosomal subunit protein uL4">
    <location>
        <begin position="1"/>
        <end position="212"/>
    </location>
</feature>
<sequence length="212" mass="22843">MKLDVIKLDGGKGGSIELPDDIFGIEEIRADILQRCVTWQLAKRRAGTHKIQVRNEVSRTGKKMYKQKGTGGARHGSRRAAQFVGGAKAHGPVVRSHAFDLPKKVRALALRHALSSKAKDGSLIVLDSATLTEAKTAALRASFEKIGVTNALVIAGAQVDNNLKLAARNIPNVDVLPNAGLNVYDVLRRRTLVLTKDAVAAIQARFQPEEAA</sequence>
<accession>B4R8L8</accession>